<dbReference type="EMBL" id="L77117">
    <property type="protein sequence ID" value="AAB98877.1"/>
    <property type="molecule type" value="Genomic_DNA"/>
</dbReference>
<dbReference type="PIR" id="G64408">
    <property type="entry name" value="G64408"/>
</dbReference>
<dbReference type="FunCoup" id="Q58281">
    <property type="interactions" value="1"/>
</dbReference>
<dbReference type="STRING" id="243232.MJ_0871"/>
<dbReference type="PaxDb" id="243232-MJ_0871"/>
<dbReference type="EnsemblBacteria" id="AAB98877">
    <property type="protein sequence ID" value="AAB98877"/>
    <property type="gene ID" value="MJ_0871"/>
</dbReference>
<dbReference type="KEGG" id="mja:MJ_0871"/>
<dbReference type="eggNOG" id="arCOG00360">
    <property type="taxonomic scope" value="Archaea"/>
</dbReference>
<dbReference type="HOGENOM" id="CLU_048086_2_0_2"/>
<dbReference type="InParanoid" id="Q58281"/>
<dbReference type="PhylomeDB" id="Q58281"/>
<dbReference type="Proteomes" id="UP000000805">
    <property type="component" value="Chromosome"/>
</dbReference>
<dbReference type="GO" id="GO:0005886">
    <property type="term" value="C:plasma membrane"/>
    <property type="evidence" value="ECO:0007669"/>
    <property type="project" value="UniProtKB-SubCell"/>
</dbReference>
<dbReference type="InterPro" id="IPR011642">
    <property type="entry name" value="Gate_dom"/>
</dbReference>
<dbReference type="InterPro" id="IPR038880">
    <property type="entry name" value="MJ0871-like"/>
</dbReference>
<dbReference type="PANTHER" id="PTHR38139">
    <property type="entry name" value="GATE DOMAIN-CONTAINING PROTEIN"/>
    <property type="match status" value="1"/>
</dbReference>
<dbReference type="PANTHER" id="PTHR38139:SF1">
    <property type="entry name" value="NUCLEOSIDE TRANSPORTER_FEOB GTPASE GATE DOMAIN-CONTAINING PROTEIN"/>
    <property type="match status" value="1"/>
</dbReference>
<dbReference type="Pfam" id="PF07670">
    <property type="entry name" value="Gate"/>
    <property type="match status" value="2"/>
</dbReference>
<name>Y871_METJA</name>
<sequence length="317" mass="35128">MIVVDYITPLMESMKISAYYTIRISIIVLTTVFIVNYIMSTGIMKKLSNMLSPILRRLKVNPLSISSTLACFFSPTVGYSILAEGLKENKVNEREVIGASLANSFPSVLSHTFTFFIPVVVPILGHTGVLYVLIRLGVALAKTIIGFLYLSIISEDYSFEMPEINKLNKKENAKKSFKSTIRFAKRLIPIMFFMMTLVLYLSKIGFFDYVEKFVQPITNLLNLNPNVGILALTEIMNVQAAIVMAGGFLNEGILSSKEVLIGLIIGNVLTFSTRYVKHSLPLHVSLFGAKLGTKIVMVNAAITLLLDIFIIAGLLLI</sequence>
<protein>
    <recommendedName>
        <fullName>Uncharacterized protein MJ0871</fullName>
    </recommendedName>
</protein>
<proteinExistence type="predicted"/>
<comment type="subcellular location">
    <subcellularLocation>
        <location evidence="2">Cell membrane</location>
        <topology evidence="2">Multi-pass membrane protein</topology>
    </subcellularLocation>
</comment>
<comment type="similarity">
    <text evidence="2">To M.jannaschii MJ0880, MJ1556 and MJ1589.</text>
</comment>
<feature type="chain" id="PRO_0000107086" description="Uncharacterized protein MJ0871">
    <location>
        <begin position="1"/>
        <end position="317"/>
    </location>
</feature>
<feature type="transmembrane region" description="Helical" evidence="1">
    <location>
        <begin position="24"/>
        <end position="44"/>
    </location>
</feature>
<feature type="transmembrane region" description="Helical" evidence="1">
    <location>
        <begin position="63"/>
        <end position="83"/>
    </location>
</feature>
<feature type="transmembrane region" description="Helical" evidence="1">
    <location>
        <begin position="136"/>
        <end position="156"/>
    </location>
</feature>
<feature type="transmembrane region" description="Helical" evidence="1">
    <location>
        <begin position="187"/>
        <end position="207"/>
    </location>
</feature>
<feature type="transmembrane region" description="Helical" evidence="1">
    <location>
        <begin position="229"/>
        <end position="249"/>
    </location>
</feature>
<feature type="transmembrane region" description="Helical" evidence="1">
    <location>
        <begin position="252"/>
        <end position="272"/>
    </location>
</feature>
<feature type="transmembrane region" description="Helical" evidence="1">
    <location>
        <begin position="295"/>
        <end position="315"/>
    </location>
</feature>
<accession>Q58281</accession>
<keyword id="KW-1003">Cell membrane</keyword>
<keyword id="KW-0472">Membrane</keyword>
<keyword id="KW-1185">Reference proteome</keyword>
<keyword id="KW-0812">Transmembrane</keyword>
<keyword id="KW-1133">Transmembrane helix</keyword>
<evidence type="ECO:0000255" key="1"/>
<evidence type="ECO:0000305" key="2"/>
<gene>
    <name type="ordered locus">MJ0871</name>
</gene>
<organism>
    <name type="scientific">Methanocaldococcus jannaschii (strain ATCC 43067 / DSM 2661 / JAL-1 / JCM 10045 / NBRC 100440)</name>
    <name type="common">Methanococcus jannaschii</name>
    <dbReference type="NCBI Taxonomy" id="243232"/>
    <lineage>
        <taxon>Archaea</taxon>
        <taxon>Methanobacteriati</taxon>
        <taxon>Methanobacteriota</taxon>
        <taxon>Methanomada group</taxon>
        <taxon>Methanococci</taxon>
        <taxon>Methanococcales</taxon>
        <taxon>Methanocaldococcaceae</taxon>
        <taxon>Methanocaldococcus</taxon>
    </lineage>
</organism>
<reference key="1">
    <citation type="journal article" date="1996" name="Science">
        <title>Complete genome sequence of the methanogenic archaeon, Methanococcus jannaschii.</title>
        <authorList>
            <person name="Bult C.J."/>
            <person name="White O."/>
            <person name="Olsen G.J."/>
            <person name="Zhou L."/>
            <person name="Fleischmann R.D."/>
            <person name="Sutton G.G."/>
            <person name="Blake J.A."/>
            <person name="FitzGerald L.M."/>
            <person name="Clayton R.A."/>
            <person name="Gocayne J.D."/>
            <person name="Kerlavage A.R."/>
            <person name="Dougherty B.A."/>
            <person name="Tomb J.-F."/>
            <person name="Adams M.D."/>
            <person name="Reich C.I."/>
            <person name="Overbeek R."/>
            <person name="Kirkness E.F."/>
            <person name="Weinstock K.G."/>
            <person name="Merrick J.M."/>
            <person name="Glodek A."/>
            <person name="Scott J.L."/>
            <person name="Geoghagen N.S.M."/>
            <person name="Weidman J.F."/>
            <person name="Fuhrmann J.L."/>
            <person name="Nguyen D."/>
            <person name="Utterback T.R."/>
            <person name="Kelley J.M."/>
            <person name="Peterson J.D."/>
            <person name="Sadow P.W."/>
            <person name="Hanna M.C."/>
            <person name="Cotton M.D."/>
            <person name="Roberts K.M."/>
            <person name="Hurst M.A."/>
            <person name="Kaine B.P."/>
            <person name="Borodovsky M."/>
            <person name="Klenk H.-P."/>
            <person name="Fraser C.M."/>
            <person name="Smith H.O."/>
            <person name="Woese C.R."/>
            <person name="Venter J.C."/>
        </authorList>
    </citation>
    <scope>NUCLEOTIDE SEQUENCE [LARGE SCALE GENOMIC DNA]</scope>
    <source>
        <strain>ATCC 43067 / DSM 2661 / JAL-1 / JCM 10045 / NBRC 100440</strain>
    </source>
</reference>